<sequence length="364" mass="40604">MKTQYRIAVLPGDGIGPEVMREAYKILKILKNNFLLSFEIEEFNVGGIAIDQEGLALPKKTLLGCEKSDAILFGSVGGKKWDNFPIEERPERAALLPLRKHFNLFANLRPAKIYSELKHLSPLRSNIVRDGFDILCIRELTGGIYFGQPSGRRLEKNNIEYAFDTEIYYDYEINRIAHLAFQLAQSRSHKVCSIDKSNVLNSSILWKEIVQKVSKNYPDVDLSHLYIDNAIMQIIKNPNQFDVLLCPNLFGDIISDECAIITGSIGMLPSASLNEKKFGLYEPAGGSAPDIAGKNIANPIAQILSLSMLVRYGMNLKDIADKIDKSVLSVLKKGYRTADISNNNNYLKTNEMGDVIANALISGE</sequence>
<protein>
    <recommendedName>
        <fullName evidence="1">3-isopropylmalate dehydrogenase</fullName>
        <ecNumber evidence="1">1.1.1.85</ecNumber>
    </recommendedName>
    <alternativeName>
        <fullName evidence="1">3-IPM-DH</fullName>
    </alternativeName>
    <alternativeName>
        <fullName evidence="1">Beta-IPM dehydrogenase</fullName>
        <shortName evidence="1">IMDH</shortName>
    </alternativeName>
</protein>
<gene>
    <name evidence="1" type="primary">leuB</name>
</gene>
<accession>Q9EVI1</accession>
<keyword id="KW-0028">Amino-acid biosynthesis</keyword>
<keyword id="KW-0100">Branched-chain amino acid biosynthesis</keyword>
<keyword id="KW-0963">Cytoplasm</keyword>
<keyword id="KW-0432">Leucine biosynthesis</keyword>
<keyword id="KW-0460">Magnesium</keyword>
<keyword id="KW-0464">Manganese</keyword>
<keyword id="KW-0479">Metal-binding</keyword>
<keyword id="KW-0520">NAD</keyword>
<keyword id="KW-0560">Oxidoreductase</keyword>
<keyword id="KW-0614">Plasmid</keyword>
<feature type="chain" id="PRO_0000083667" description="3-isopropylmalate dehydrogenase">
    <location>
        <begin position="1"/>
        <end position="364"/>
    </location>
</feature>
<feature type="binding site" evidence="1">
    <location>
        <begin position="78"/>
        <end position="91"/>
    </location>
    <ligand>
        <name>NAD(+)</name>
        <dbReference type="ChEBI" id="CHEBI:57540"/>
    </ligand>
</feature>
<feature type="binding site" evidence="1">
    <location>
        <position position="99"/>
    </location>
    <ligand>
        <name>substrate</name>
    </ligand>
</feature>
<feature type="binding site" evidence="1">
    <location>
        <position position="109"/>
    </location>
    <ligand>
        <name>substrate</name>
    </ligand>
</feature>
<feature type="binding site" evidence="1">
    <location>
        <position position="138"/>
    </location>
    <ligand>
        <name>substrate</name>
    </ligand>
</feature>
<feature type="binding site" evidence="1">
    <location>
        <position position="228"/>
    </location>
    <ligand>
        <name>Mg(2+)</name>
        <dbReference type="ChEBI" id="CHEBI:18420"/>
    </ligand>
</feature>
<feature type="binding site" evidence="1">
    <location>
        <position position="228"/>
    </location>
    <ligand>
        <name>substrate</name>
    </ligand>
</feature>
<feature type="binding site" evidence="1">
    <location>
        <position position="252"/>
    </location>
    <ligand>
        <name>Mg(2+)</name>
        <dbReference type="ChEBI" id="CHEBI:18420"/>
    </ligand>
</feature>
<feature type="binding site" evidence="1">
    <location>
        <position position="256"/>
    </location>
    <ligand>
        <name>Mg(2+)</name>
        <dbReference type="ChEBI" id="CHEBI:18420"/>
    </ligand>
</feature>
<feature type="binding site" evidence="1">
    <location>
        <begin position="286"/>
        <end position="298"/>
    </location>
    <ligand>
        <name>NAD(+)</name>
        <dbReference type="ChEBI" id="CHEBI:57540"/>
    </ligand>
</feature>
<feature type="site" description="Important for catalysis" evidence="1">
    <location>
        <position position="145"/>
    </location>
</feature>
<feature type="site" description="Important for catalysis" evidence="1">
    <location>
        <position position="196"/>
    </location>
</feature>
<geneLocation type="plasmid">
    <name>pLeu</name>
    <name>pBAp1</name>
</geneLocation>
<comment type="function">
    <text evidence="1">Catalyzes the oxidation of 3-carboxy-2-hydroxy-4-methylpentanoate (3-isopropylmalate) to 3-carboxy-4-methyl-2-oxopentanoate. The product decarboxylates to 4-methyl-2 oxopentanoate.</text>
</comment>
<comment type="catalytic activity">
    <reaction evidence="1">
        <text>(2R,3S)-3-isopropylmalate + NAD(+) = 4-methyl-2-oxopentanoate + CO2 + NADH</text>
        <dbReference type="Rhea" id="RHEA:32271"/>
        <dbReference type="ChEBI" id="CHEBI:16526"/>
        <dbReference type="ChEBI" id="CHEBI:17865"/>
        <dbReference type="ChEBI" id="CHEBI:35121"/>
        <dbReference type="ChEBI" id="CHEBI:57540"/>
        <dbReference type="ChEBI" id="CHEBI:57945"/>
        <dbReference type="EC" id="1.1.1.85"/>
    </reaction>
</comment>
<comment type="cofactor">
    <cofactor evidence="1">
        <name>Mg(2+)</name>
        <dbReference type="ChEBI" id="CHEBI:18420"/>
    </cofactor>
    <cofactor evidence="1">
        <name>Mn(2+)</name>
        <dbReference type="ChEBI" id="CHEBI:29035"/>
    </cofactor>
    <text evidence="1">Binds 1 Mg(2+) or Mn(2+) ion per subunit.</text>
</comment>
<comment type="pathway">
    <text evidence="1">Amino-acid biosynthesis; L-leucine biosynthesis; L-leucine from 3-methyl-2-oxobutanoate: step 3/4.</text>
</comment>
<comment type="subunit">
    <text evidence="1">Homodimer.</text>
</comment>
<comment type="subcellular location">
    <subcellularLocation>
        <location evidence="1">Cytoplasm</location>
    </subcellularLocation>
</comment>
<comment type="similarity">
    <text evidence="1">Belongs to the isocitrate and isopropylmalate dehydrogenases family. LeuB type 1 subfamily.</text>
</comment>
<organism>
    <name type="scientific">Buchnera aphidicola subsp. Uroleucon obscurum</name>
    <dbReference type="NCBI Taxonomy" id="118119"/>
    <lineage>
        <taxon>Bacteria</taxon>
        <taxon>Pseudomonadati</taxon>
        <taxon>Pseudomonadota</taxon>
        <taxon>Gammaproteobacteria</taxon>
        <taxon>Enterobacterales</taxon>
        <taxon>Erwiniaceae</taxon>
        <taxon>Buchnera</taxon>
    </lineage>
</organism>
<evidence type="ECO:0000255" key="1">
    <source>
        <dbReference type="HAMAP-Rule" id="MF_01033"/>
    </source>
</evidence>
<name>LEU3_BUCUO</name>
<dbReference type="EC" id="1.1.1.85" evidence="1"/>
<dbReference type="EMBL" id="AF197450">
    <property type="protein sequence ID" value="AAG31384.1"/>
    <property type="molecule type" value="Genomic_DNA"/>
</dbReference>
<dbReference type="SMR" id="Q9EVI1"/>
<dbReference type="UniPathway" id="UPA00048">
    <property type="reaction ID" value="UER00072"/>
</dbReference>
<dbReference type="GO" id="GO:0005829">
    <property type="term" value="C:cytosol"/>
    <property type="evidence" value="ECO:0007669"/>
    <property type="project" value="TreeGrafter"/>
</dbReference>
<dbReference type="GO" id="GO:0003862">
    <property type="term" value="F:3-isopropylmalate dehydrogenase activity"/>
    <property type="evidence" value="ECO:0007669"/>
    <property type="project" value="UniProtKB-UniRule"/>
</dbReference>
<dbReference type="GO" id="GO:0000287">
    <property type="term" value="F:magnesium ion binding"/>
    <property type="evidence" value="ECO:0007669"/>
    <property type="project" value="InterPro"/>
</dbReference>
<dbReference type="GO" id="GO:0051287">
    <property type="term" value="F:NAD binding"/>
    <property type="evidence" value="ECO:0007669"/>
    <property type="project" value="InterPro"/>
</dbReference>
<dbReference type="GO" id="GO:0009098">
    <property type="term" value="P:L-leucine biosynthetic process"/>
    <property type="evidence" value="ECO:0007669"/>
    <property type="project" value="UniProtKB-UniRule"/>
</dbReference>
<dbReference type="FunFam" id="3.40.718.10:FF:000006">
    <property type="entry name" value="3-isopropylmalate dehydrogenase"/>
    <property type="match status" value="1"/>
</dbReference>
<dbReference type="Gene3D" id="3.40.718.10">
    <property type="entry name" value="Isopropylmalate Dehydrogenase"/>
    <property type="match status" value="1"/>
</dbReference>
<dbReference type="HAMAP" id="MF_01033">
    <property type="entry name" value="LeuB_type1"/>
    <property type="match status" value="1"/>
</dbReference>
<dbReference type="InterPro" id="IPR019818">
    <property type="entry name" value="IsoCit/isopropylmalate_DH_CS"/>
</dbReference>
<dbReference type="InterPro" id="IPR024084">
    <property type="entry name" value="IsoPropMal-DH-like_dom"/>
</dbReference>
<dbReference type="InterPro" id="IPR004429">
    <property type="entry name" value="Isopropylmalate_DH"/>
</dbReference>
<dbReference type="NCBIfam" id="TIGR00169">
    <property type="entry name" value="leuB"/>
    <property type="match status" value="1"/>
</dbReference>
<dbReference type="PANTHER" id="PTHR42979">
    <property type="entry name" value="3-ISOPROPYLMALATE DEHYDROGENASE"/>
    <property type="match status" value="1"/>
</dbReference>
<dbReference type="PANTHER" id="PTHR42979:SF1">
    <property type="entry name" value="3-ISOPROPYLMALATE DEHYDROGENASE"/>
    <property type="match status" value="1"/>
</dbReference>
<dbReference type="Pfam" id="PF00180">
    <property type="entry name" value="Iso_dh"/>
    <property type="match status" value="1"/>
</dbReference>
<dbReference type="SMART" id="SM01329">
    <property type="entry name" value="Iso_dh"/>
    <property type="match status" value="1"/>
</dbReference>
<dbReference type="SUPFAM" id="SSF53659">
    <property type="entry name" value="Isocitrate/Isopropylmalate dehydrogenase-like"/>
    <property type="match status" value="1"/>
</dbReference>
<dbReference type="PROSITE" id="PS00470">
    <property type="entry name" value="IDH_IMDH"/>
    <property type="match status" value="1"/>
</dbReference>
<proteinExistence type="inferred from homology"/>
<reference key="1">
    <citation type="journal article" date="2001" name="J. Bacteriol.">
        <title>Vertical transmission of biosynthetic plasmids in aphid endosymbionts (Buchnera).</title>
        <authorList>
            <person name="Wernegreen J.J."/>
            <person name="Moran N.A."/>
        </authorList>
    </citation>
    <scope>NUCLEOTIDE SEQUENCE [GENOMIC DNA]</scope>
</reference>